<reference evidence="6" key="1">
    <citation type="journal article" date="2012" name="Biol. Chem.">
        <title>Development of a host blood meal database: de novo sequencing of hemoglobin from nine small mammals using mass spectrometry.</title>
        <authorList>
            <person name="Laskay U.A."/>
            <person name="Burg J."/>
            <person name="Kaleta E.J."/>
            <person name="Vilcins I.M."/>
            <person name="Telford Iii S.R."/>
            <person name="Barbour A.G."/>
            <person name="Wysocki V.H."/>
        </authorList>
    </citation>
    <scope>PROTEIN SEQUENCE</scope>
    <source>
        <tissue evidence="4">Erythrocyte</tissue>
    </source>
</reference>
<keyword id="KW-0007">Acetylation</keyword>
<keyword id="KW-0903">Direct protein sequencing</keyword>
<keyword id="KW-0349">Heme</keyword>
<keyword id="KW-0408">Iron</keyword>
<keyword id="KW-0479">Metal-binding</keyword>
<keyword id="KW-0561">Oxygen transport</keyword>
<keyword id="KW-0597">Phosphoprotein</keyword>
<keyword id="KW-0813">Transport</keyword>
<sequence length="141" mass="14869">VLSADDKANVKAAWGKLGGHGAEYGAEALGRMFCSFPTTKTYFPHFDVSHGSAQVKGHGAKVADALTTAAGHLDDLPGALSALSDLHAHKLRVDPVNFKLLSHCLLVTLAAHHPAEFTPAVHASLDKFLASVSTVLTSKYR</sequence>
<feature type="chain" id="PRO_0000415586" description="Hemoglobin subunit alpha">
    <location>
        <begin position="1"/>
        <end position="141"/>
    </location>
</feature>
<feature type="domain" description="Globin" evidence="3">
    <location>
        <begin position="1"/>
        <end position="141"/>
    </location>
</feature>
<feature type="binding site" evidence="3">
    <location>
        <position position="58"/>
    </location>
    <ligand>
        <name>O2</name>
        <dbReference type="ChEBI" id="CHEBI:15379"/>
    </ligand>
</feature>
<feature type="binding site" description="proximal binding residue" evidence="3">
    <location>
        <position position="87"/>
    </location>
    <ligand>
        <name>heme b</name>
        <dbReference type="ChEBI" id="CHEBI:60344"/>
    </ligand>
    <ligandPart>
        <name>Fe</name>
        <dbReference type="ChEBI" id="CHEBI:18248"/>
    </ligandPart>
</feature>
<feature type="modified residue" description="Phosphoserine" evidence="2">
    <location>
        <position position="3"/>
    </location>
</feature>
<feature type="modified residue" description="N6-succinyllysine" evidence="1">
    <location>
        <position position="7"/>
    </location>
</feature>
<feature type="modified residue" description="N6-succinyllysine" evidence="1">
    <location>
        <position position="11"/>
    </location>
</feature>
<feature type="modified residue" description="N6-acetyllysine; alternate" evidence="2">
    <location>
        <position position="16"/>
    </location>
</feature>
<feature type="modified residue" description="N6-succinyllysine; alternate" evidence="1">
    <location>
        <position position="16"/>
    </location>
</feature>
<feature type="modified residue" description="Phosphotyrosine" evidence="2">
    <location>
        <position position="24"/>
    </location>
</feature>
<feature type="modified residue" description="Phosphoserine" evidence="2">
    <location>
        <position position="35"/>
    </location>
</feature>
<feature type="modified residue" description="N6-succinyllysine" evidence="1">
    <location>
        <position position="40"/>
    </location>
</feature>
<feature type="modified residue" description="Phosphoserine" evidence="2">
    <location>
        <position position="49"/>
    </location>
</feature>
<feature type="modified residue" description="Phosphoserine" evidence="1">
    <location>
        <position position="102"/>
    </location>
</feature>
<feature type="modified residue" description="Phosphothreonine" evidence="1">
    <location>
        <position position="108"/>
    </location>
</feature>
<feature type="modified residue" description="Phosphoserine" evidence="1">
    <location>
        <position position="124"/>
    </location>
</feature>
<feature type="modified residue" description="Phosphoserine" evidence="1">
    <location>
        <position position="131"/>
    </location>
</feature>
<feature type="modified residue" description="Phosphothreonine" evidence="1">
    <location>
        <position position="134"/>
    </location>
</feature>
<feature type="modified residue" description="Phosphothreonine" evidence="1">
    <location>
        <position position="137"/>
    </location>
</feature>
<feature type="modified residue" description="Phosphoserine" evidence="1">
    <location>
        <position position="138"/>
    </location>
</feature>
<feature type="unsure residue" description="L or I" evidence="4">
    <location>
        <position position="2"/>
    </location>
</feature>
<feature type="unsure residue" description="L or I" evidence="4">
    <location>
        <position position="17"/>
    </location>
</feature>
<feature type="unsure residue" description="L or I" evidence="4">
    <location>
        <position position="29"/>
    </location>
</feature>
<feature type="unsure residue" description="L or I" evidence="4">
    <location>
        <position position="66"/>
    </location>
</feature>
<feature type="unsure residue" description="L or I" evidence="4">
    <location>
        <position position="73"/>
    </location>
</feature>
<feature type="unsure residue" description="L or I" evidence="4">
    <location>
        <position position="76"/>
    </location>
</feature>
<feature type="unsure residue" description="L or I" evidence="4">
    <location>
        <position position="80"/>
    </location>
</feature>
<feature type="unsure residue" description="L or I" evidence="4">
    <location>
        <position position="83"/>
    </location>
</feature>
<feature type="unsure residue" description="L or I" evidence="4">
    <location>
        <position position="86"/>
    </location>
</feature>
<feature type="unsure residue" description="L or I" evidence="4">
    <location>
        <position position="91"/>
    </location>
</feature>
<feature type="unsure residue" description="L or I" evidence="4">
    <location>
        <position position="100"/>
    </location>
</feature>
<feature type="unsure residue" description="L or I" evidence="4">
    <location>
        <position position="101"/>
    </location>
</feature>
<feature type="unsure residue" description="L or I" evidence="4">
    <location>
        <position position="105"/>
    </location>
</feature>
<feature type="unsure residue" description="L or I" evidence="4">
    <location>
        <position position="106"/>
    </location>
</feature>
<feature type="unsure residue" description="L or I" evidence="4">
    <location>
        <position position="109"/>
    </location>
</feature>
<feature type="unsure residue" description="L or I" evidence="4">
    <location>
        <position position="125"/>
    </location>
</feature>
<feature type="unsure residue" description="L or I" evidence="4">
    <location>
        <position position="129"/>
    </location>
</feature>
<feature type="unsure residue" description="L or I" evidence="4">
    <location>
        <position position="136"/>
    </location>
</feature>
<protein>
    <recommendedName>
        <fullName evidence="5">Hemoglobin subunit alpha</fullName>
    </recommendedName>
</protein>
<comment type="function">
    <text evidence="6">Involved in oxygen transport from the lung to the various peripheral tissues.</text>
</comment>
<comment type="subunit">
    <text evidence="6">Heterotetramer of two alpha chains and two beta chains.</text>
</comment>
<comment type="tissue specificity">
    <text evidence="6">Red blood cells.</text>
</comment>
<comment type="similarity">
    <text evidence="3">Belongs to the globin family.</text>
</comment>
<proteinExistence type="evidence at protein level"/>
<organism>
    <name type="scientific">Peromyscus californicus</name>
    <name type="common">California mouse</name>
    <dbReference type="NCBI Taxonomy" id="42520"/>
    <lineage>
        <taxon>Eukaryota</taxon>
        <taxon>Metazoa</taxon>
        <taxon>Chordata</taxon>
        <taxon>Craniata</taxon>
        <taxon>Vertebrata</taxon>
        <taxon>Euteleostomi</taxon>
        <taxon>Mammalia</taxon>
        <taxon>Eutheria</taxon>
        <taxon>Euarchontoglires</taxon>
        <taxon>Glires</taxon>
        <taxon>Rodentia</taxon>
        <taxon>Myomorpha</taxon>
        <taxon>Muroidea</taxon>
        <taxon>Cricetidae</taxon>
        <taxon>Neotominae</taxon>
        <taxon>Peromyscus</taxon>
    </lineage>
</organism>
<dbReference type="SMR" id="B3EWD5"/>
<dbReference type="GO" id="GO:0072562">
    <property type="term" value="C:blood microparticle"/>
    <property type="evidence" value="ECO:0007669"/>
    <property type="project" value="TreeGrafter"/>
</dbReference>
<dbReference type="GO" id="GO:0031838">
    <property type="term" value="C:haptoglobin-hemoglobin complex"/>
    <property type="evidence" value="ECO:0007669"/>
    <property type="project" value="TreeGrafter"/>
</dbReference>
<dbReference type="GO" id="GO:0005833">
    <property type="term" value="C:hemoglobin complex"/>
    <property type="evidence" value="ECO:0007669"/>
    <property type="project" value="InterPro"/>
</dbReference>
<dbReference type="GO" id="GO:0031720">
    <property type="term" value="F:haptoglobin binding"/>
    <property type="evidence" value="ECO:0007669"/>
    <property type="project" value="TreeGrafter"/>
</dbReference>
<dbReference type="GO" id="GO:0020037">
    <property type="term" value="F:heme binding"/>
    <property type="evidence" value="ECO:0007669"/>
    <property type="project" value="InterPro"/>
</dbReference>
<dbReference type="GO" id="GO:0005506">
    <property type="term" value="F:iron ion binding"/>
    <property type="evidence" value="ECO:0007669"/>
    <property type="project" value="InterPro"/>
</dbReference>
<dbReference type="GO" id="GO:0043177">
    <property type="term" value="F:organic acid binding"/>
    <property type="evidence" value="ECO:0007669"/>
    <property type="project" value="TreeGrafter"/>
</dbReference>
<dbReference type="GO" id="GO:0019825">
    <property type="term" value="F:oxygen binding"/>
    <property type="evidence" value="ECO:0007669"/>
    <property type="project" value="InterPro"/>
</dbReference>
<dbReference type="GO" id="GO:0005344">
    <property type="term" value="F:oxygen carrier activity"/>
    <property type="evidence" value="ECO:0007669"/>
    <property type="project" value="UniProtKB-KW"/>
</dbReference>
<dbReference type="GO" id="GO:0004601">
    <property type="term" value="F:peroxidase activity"/>
    <property type="evidence" value="ECO:0007669"/>
    <property type="project" value="TreeGrafter"/>
</dbReference>
<dbReference type="GO" id="GO:0042744">
    <property type="term" value="P:hydrogen peroxide catabolic process"/>
    <property type="evidence" value="ECO:0007669"/>
    <property type="project" value="TreeGrafter"/>
</dbReference>
<dbReference type="CDD" id="cd08927">
    <property type="entry name" value="Hb-alpha-like"/>
    <property type="match status" value="1"/>
</dbReference>
<dbReference type="FunFam" id="1.10.490.10:FF:000002">
    <property type="entry name" value="Hemoglobin subunit alpha"/>
    <property type="match status" value="1"/>
</dbReference>
<dbReference type="Gene3D" id="1.10.490.10">
    <property type="entry name" value="Globins"/>
    <property type="match status" value="1"/>
</dbReference>
<dbReference type="InterPro" id="IPR000971">
    <property type="entry name" value="Globin"/>
</dbReference>
<dbReference type="InterPro" id="IPR009050">
    <property type="entry name" value="Globin-like_sf"/>
</dbReference>
<dbReference type="InterPro" id="IPR012292">
    <property type="entry name" value="Globin/Proto"/>
</dbReference>
<dbReference type="InterPro" id="IPR002338">
    <property type="entry name" value="Hemoglobin_a-typ"/>
</dbReference>
<dbReference type="InterPro" id="IPR050056">
    <property type="entry name" value="Hemoglobin_oxygen_transport"/>
</dbReference>
<dbReference type="InterPro" id="IPR002339">
    <property type="entry name" value="Hemoglobin_pi"/>
</dbReference>
<dbReference type="PANTHER" id="PTHR11442">
    <property type="entry name" value="HEMOGLOBIN FAMILY MEMBER"/>
    <property type="match status" value="1"/>
</dbReference>
<dbReference type="PANTHER" id="PTHR11442:SF48">
    <property type="entry name" value="HEMOGLOBIN SUBUNIT ALPHA"/>
    <property type="match status" value="1"/>
</dbReference>
<dbReference type="Pfam" id="PF00042">
    <property type="entry name" value="Globin"/>
    <property type="match status" value="1"/>
</dbReference>
<dbReference type="PRINTS" id="PR00612">
    <property type="entry name" value="ALPHAHAEM"/>
</dbReference>
<dbReference type="PRINTS" id="PR00815">
    <property type="entry name" value="PIHAEM"/>
</dbReference>
<dbReference type="SUPFAM" id="SSF46458">
    <property type="entry name" value="Globin-like"/>
    <property type="match status" value="1"/>
</dbReference>
<dbReference type="PROSITE" id="PS01033">
    <property type="entry name" value="GLOBIN"/>
    <property type="match status" value="1"/>
</dbReference>
<accession>B3EWD5</accession>
<name>HBA_PERCA</name>
<evidence type="ECO:0000250" key="1">
    <source>
        <dbReference type="UniProtKB" id="P01942"/>
    </source>
</evidence>
<evidence type="ECO:0000250" key="2">
    <source>
        <dbReference type="UniProtKB" id="P69905"/>
    </source>
</evidence>
<evidence type="ECO:0000255" key="3">
    <source>
        <dbReference type="PROSITE-ProRule" id="PRU00238"/>
    </source>
</evidence>
<evidence type="ECO:0000269" key="4">
    <source>
    </source>
</evidence>
<evidence type="ECO:0000303" key="5">
    <source>
    </source>
</evidence>
<evidence type="ECO:0000305" key="6"/>